<reference key="1">
    <citation type="journal article" date="2008" name="PLoS ONE">
        <title>Genome biology of Actinobacillus pleuropneumoniae JL03, an isolate of serotype 3 prevalent in China.</title>
        <authorList>
            <person name="Xu Z."/>
            <person name="Zhou Y."/>
            <person name="Li L."/>
            <person name="Zhou R."/>
            <person name="Xiao S."/>
            <person name="Wan Y."/>
            <person name="Zhang S."/>
            <person name="Wang K."/>
            <person name="Li W."/>
            <person name="Li L."/>
            <person name="Jin H."/>
            <person name="Kang M."/>
            <person name="Dalai B."/>
            <person name="Li T."/>
            <person name="Liu L."/>
            <person name="Cheng Y."/>
            <person name="Zhang L."/>
            <person name="Xu T."/>
            <person name="Zheng H."/>
            <person name="Pu S."/>
            <person name="Wang B."/>
            <person name="Gu W."/>
            <person name="Zhang X.L."/>
            <person name="Zhu G.-F."/>
            <person name="Wang S."/>
            <person name="Zhao G.-P."/>
            <person name="Chen H."/>
        </authorList>
    </citation>
    <scope>NUCLEOTIDE SEQUENCE [LARGE SCALE GENOMIC DNA]</scope>
    <source>
        <strain>JL03</strain>
    </source>
</reference>
<proteinExistence type="inferred from homology"/>
<name>G6PI_ACTPJ</name>
<sequence length="546" mass="60385">MQNINPTQTAAWSALEQHKADNLNIPQLFAEDANRFDKYHLNFEQQILVDFSKNAINQKTLELLRQLANECGLASATEAMFSGQKINRTENRAVLHTALRNRSNTPVLVDGKDVMPEVNAVLAKMKDFCERIISGSWKGYTGKAITDVINIGIGGSDLGPYMVTEALRPYKNHLNMHFVSNVDGTHIAEVLKKVNPETTLVLVASKTFTTQETMANALTAREWLLAAVKDESAVAKHFAALSTNAKEVAKFGIDTANMFEFWDWVGGRYSLWSAIGLSIALSLGFENFEALLSGAHAMDNHFRTAPIEKNIPTTLALIGIWNSNFLGAETEALLPYDQYLHRFAAYFQQGNMESNGKFVGRDGSPVTHQTGPIVWGEPGTNGQHAFYQLIHQGTKLIPCDFIAPAQTHNPVGDHHAKLLSNFFAQTEALAFGKSKETVEAEFVAAGKNLADVAEIVPFKVFTGNKPTNSILVQKITPFTLGALIAMYEHKIFVQGVIFNIYSFDQWGVELGKQLANRILPELQNAEKISSHDSSTNGLINQFKAWR</sequence>
<accession>B0BQ77</accession>
<feature type="chain" id="PRO_1000125687" description="Glucose-6-phosphate isomerase">
    <location>
        <begin position="1"/>
        <end position="546"/>
    </location>
</feature>
<feature type="active site" description="Proton donor" evidence="1">
    <location>
        <position position="353"/>
    </location>
</feature>
<feature type="active site" evidence="1">
    <location>
        <position position="384"/>
    </location>
</feature>
<feature type="active site" evidence="1">
    <location>
        <position position="512"/>
    </location>
</feature>
<comment type="function">
    <text evidence="1">Catalyzes the reversible isomerization of glucose-6-phosphate to fructose-6-phosphate.</text>
</comment>
<comment type="catalytic activity">
    <reaction evidence="1">
        <text>alpha-D-glucose 6-phosphate = beta-D-fructose 6-phosphate</text>
        <dbReference type="Rhea" id="RHEA:11816"/>
        <dbReference type="ChEBI" id="CHEBI:57634"/>
        <dbReference type="ChEBI" id="CHEBI:58225"/>
        <dbReference type="EC" id="5.3.1.9"/>
    </reaction>
</comment>
<comment type="pathway">
    <text evidence="1">Carbohydrate biosynthesis; gluconeogenesis.</text>
</comment>
<comment type="pathway">
    <text evidence="1">Carbohydrate degradation; glycolysis; D-glyceraldehyde 3-phosphate and glycerone phosphate from D-glucose: step 2/4.</text>
</comment>
<comment type="subcellular location">
    <subcellularLocation>
        <location evidence="1">Cytoplasm</location>
    </subcellularLocation>
</comment>
<comment type="similarity">
    <text evidence="1">Belongs to the GPI family.</text>
</comment>
<keyword id="KW-0963">Cytoplasm</keyword>
<keyword id="KW-0312">Gluconeogenesis</keyword>
<keyword id="KW-0324">Glycolysis</keyword>
<keyword id="KW-0413">Isomerase</keyword>
<gene>
    <name evidence="1" type="primary">pgi</name>
    <name type="ordered locus">APJL_1156</name>
</gene>
<dbReference type="EC" id="5.3.1.9" evidence="1"/>
<dbReference type="EMBL" id="CP000687">
    <property type="protein sequence ID" value="ABY69712.1"/>
    <property type="molecule type" value="Genomic_DNA"/>
</dbReference>
<dbReference type="RefSeq" id="WP_012263111.1">
    <property type="nucleotide sequence ID" value="NC_010278.1"/>
</dbReference>
<dbReference type="SMR" id="B0BQ77"/>
<dbReference type="KEGG" id="apj:APJL_1156"/>
<dbReference type="HOGENOM" id="CLU_017947_3_1_6"/>
<dbReference type="UniPathway" id="UPA00109">
    <property type="reaction ID" value="UER00181"/>
</dbReference>
<dbReference type="UniPathway" id="UPA00138"/>
<dbReference type="Proteomes" id="UP000008547">
    <property type="component" value="Chromosome"/>
</dbReference>
<dbReference type="GO" id="GO:0005829">
    <property type="term" value="C:cytosol"/>
    <property type="evidence" value="ECO:0007669"/>
    <property type="project" value="TreeGrafter"/>
</dbReference>
<dbReference type="GO" id="GO:0097367">
    <property type="term" value="F:carbohydrate derivative binding"/>
    <property type="evidence" value="ECO:0007669"/>
    <property type="project" value="InterPro"/>
</dbReference>
<dbReference type="GO" id="GO:0004347">
    <property type="term" value="F:glucose-6-phosphate isomerase activity"/>
    <property type="evidence" value="ECO:0007669"/>
    <property type="project" value="UniProtKB-UniRule"/>
</dbReference>
<dbReference type="GO" id="GO:0048029">
    <property type="term" value="F:monosaccharide binding"/>
    <property type="evidence" value="ECO:0007669"/>
    <property type="project" value="TreeGrafter"/>
</dbReference>
<dbReference type="GO" id="GO:0006094">
    <property type="term" value="P:gluconeogenesis"/>
    <property type="evidence" value="ECO:0007669"/>
    <property type="project" value="UniProtKB-UniRule"/>
</dbReference>
<dbReference type="GO" id="GO:0051156">
    <property type="term" value="P:glucose 6-phosphate metabolic process"/>
    <property type="evidence" value="ECO:0007669"/>
    <property type="project" value="TreeGrafter"/>
</dbReference>
<dbReference type="GO" id="GO:0006096">
    <property type="term" value="P:glycolytic process"/>
    <property type="evidence" value="ECO:0007669"/>
    <property type="project" value="UniProtKB-UniRule"/>
</dbReference>
<dbReference type="CDD" id="cd05015">
    <property type="entry name" value="SIS_PGI_1"/>
    <property type="match status" value="1"/>
</dbReference>
<dbReference type="CDD" id="cd05016">
    <property type="entry name" value="SIS_PGI_2"/>
    <property type="match status" value="1"/>
</dbReference>
<dbReference type="FunFam" id="1.10.1390.10:FF:000001">
    <property type="entry name" value="Glucose-6-phosphate isomerase"/>
    <property type="match status" value="1"/>
</dbReference>
<dbReference type="FunFam" id="3.40.50.10490:FF:000004">
    <property type="entry name" value="Glucose-6-phosphate isomerase"/>
    <property type="match status" value="1"/>
</dbReference>
<dbReference type="Gene3D" id="1.10.1390.10">
    <property type="match status" value="1"/>
</dbReference>
<dbReference type="Gene3D" id="3.40.50.10490">
    <property type="entry name" value="Glucose-6-phosphate isomerase like protein, domain 1"/>
    <property type="match status" value="2"/>
</dbReference>
<dbReference type="HAMAP" id="MF_00473">
    <property type="entry name" value="G6P_isomerase"/>
    <property type="match status" value="1"/>
</dbReference>
<dbReference type="InterPro" id="IPR001672">
    <property type="entry name" value="G6P_Isomerase"/>
</dbReference>
<dbReference type="InterPro" id="IPR023096">
    <property type="entry name" value="G6P_Isomerase_C"/>
</dbReference>
<dbReference type="InterPro" id="IPR018189">
    <property type="entry name" value="Phosphoglucose_isomerase_CS"/>
</dbReference>
<dbReference type="InterPro" id="IPR046348">
    <property type="entry name" value="SIS_dom_sf"/>
</dbReference>
<dbReference type="InterPro" id="IPR035476">
    <property type="entry name" value="SIS_PGI_1"/>
</dbReference>
<dbReference type="InterPro" id="IPR035482">
    <property type="entry name" value="SIS_PGI_2"/>
</dbReference>
<dbReference type="NCBIfam" id="NF001211">
    <property type="entry name" value="PRK00179.1"/>
    <property type="match status" value="1"/>
</dbReference>
<dbReference type="PANTHER" id="PTHR11469">
    <property type="entry name" value="GLUCOSE-6-PHOSPHATE ISOMERASE"/>
    <property type="match status" value="1"/>
</dbReference>
<dbReference type="PANTHER" id="PTHR11469:SF1">
    <property type="entry name" value="GLUCOSE-6-PHOSPHATE ISOMERASE"/>
    <property type="match status" value="1"/>
</dbReference>
<dbReference type="Pfam" id="PF00342">
    <property type="entry name" value="PGI"/>
    <property type="match status" value="1"/>
</dbReference>
<dbReference type="PRINTS" id="PR00662">
    <property type="entry name" value="G6PISOMERASE"/>
</dbReference>
<dbReference type="SUPFAM" id="SSF53697">
    <property type="entry name" value="SIS domain"/>
    <property type="match status" value="1"/>
</dbReference>
<dbReference type="PROSITE" id="PS00765">
    <property type="entry name" value="P_GLUCOSE_ISOMERASE_1"/>
    <property type="match status" value="1"/>
</dbReference>
<dbReference type="PROSITE" id="PS00174">
    <property type="entry name" value="P_GLUCOSE_ISOMERASE_2"/>
    <property type="match status" value="1"/>
</dbReference>
<dbReference type="PROSITE" id="PS51463">
    <property type="entry name" value="P_GLUCOSE_ISOMERASE_3"/>
    <property type="match status" value="1"/>
</dbReference>
<protein>
    <recommendedName>
        <fullName evidence="1">Glucose-6-phosphate isomerase</fullName>
        <shortName evidence="1">GPI</shortName>
        <ecNumber evidence="1">5.3.1.9</ecNumber>
    </recommendedName>
    <alternativeName>
        <fullName evidence="1">Phosphoglucose isomerase</fullName>
        <shortName evidence="1">PGI</shortName>
    </alternativeName>
    <alternativeName>
        <fullName evidence="1">Phosphohexose isomerase</fullName>
        <shortName evidence="1">PHI</shortName>
    </alternativeName>
</protein>
<organism>
    <name type="scientific">Actinobacillus pleuropneumoniae serotype 3 (strain JL03)</name>
    <dbReference type="NCBI Taxonomy" id="434271"/>
    <lineage>
        <taxon>Bacteria</taxon>
        <taxon>Pseudomonadati</taxon>
        <taxon>Pseudomonadota</taxon>
        <taxon>Gammaproteobacteria</taxon>
        <taxon>Pasteurellales</taxon>
        <taxon>Pasteurellaceae</taxon>
        <taxon>Actinobacillus</taxon>
    </lineage>
</organism>
<evidence type="ECO:0000255" key="1">
    <source>
        <dbReference type="HAMAP-Rule" id="MF_00473"/>
    </source>
</evidence>